<dbReference type="EC" id="4.3.3.7" evidence="1"/>
<dbReference type="EMBL" id="CP000472">
    <property type="protein sequence ID" value="ACJ29465.1"/>
    <property type="molecule type" value="Genomic_DNA"/>
</dbReference>
<dbReference type="RefSeq" id="WP_020912819.1">
    <property type="nucleotide sequence ID" value="NC_011566.1"/>
</dbReference>
<dbReference type="SMR" id="B8CMS5"/>
<dbReference type="STRING" id="225849.swp_2736"/>
<dbReference type="KEGG" id="swp:swp_2736"/>
<dbReference type="eggNOG" id="COG0329">
    <property type="taxonomic scope" value="Bacteria"/>
</dbReference>
<dbReference type="HOGENOM" id="CLU_049343_7_1_6"/>
<dbReference type="OrthoDB" id="9782828at2"/>
<dbReference type="UniPathway" id="UPA00034">
    <property type="reaction ID" value="UER00017"/>
</dbReference>
<dbReference type="Proteomes" id="UP000000753">
    <property type="component" value="Chromosome"/>
</dbReference>
<dbReference type="GO" id="GO:0005829">
    <property type="term" value="C:cytosol"/>
    <property type="evidence" value="ECO:0007669"/>
    <property type="project" value="TreeGrafter"/>
</dbReference>
<dbReference type="GO" id="GO:0008840">
    <property type="term" value="F:4-hydroxy-tetrahydrodipicolinate synthase activity"/>
    <property type="evidence" value="ECO:0007669"/>
    <property type="project" value="UniProtKB-UniRule"/>
</dbReference>
<dbReference type="GO" id="GO:0019877">
    <property type="term" value="P:diaminopimelate biosynthetic process"/>
    <property type="evidence" value="ECO:0007669"/>
    <property type="project" value="UniProtKB-UniRule"/>
</dbReference>
<dbReference type="GO" id="GO:0009089">
    <property type="term" value="P:lysine biosynthetic process via diaminopimelate"/>
    <property type="evidence" value="ECO:0007669"/>
    <property type="project" value="UniProtKB-UniRule"/>
</dbReference>
<dbReference type="CDD" id="cd00950">
    <property type="entry name" value="DHDPS"/>
    <property type="match status" value="1"/>
</dbReference>
<dbReference type="Gene3D" id="3.20.20.70">
    <property type="entry name" value="Aldolase class I"/>
    <property type="match status" value="1"/>
</dbReference>
<dbReference type="HAMAP" id="MF_00418">
    <property type="entry name" value="DapA"/>
    <property type="match status" value="1"/>
</dbReference>
<dbReference type="InterPro" id="IPR013785">
    <property type="entry name" value="Aldolase_TIM"/>
</dbReference>
<dbReference type="InterPro" id="IPR005263">
    <property type="entry name" value="DapA"/>
</dbReference>
<dbReference type="InterPro" id="IPR002220">
    <property type="entry name" value="DapA-like"/>
</dbReference>
<dbReference type="InterPro" id="IPR020625">
    <property type="entry name" value="Schiff_base-form_aldolases_AS"/>
</dbReference>
<dbReference type="InterPro" id="IPR020624">
    <property type="entry name" value="Schiff_base-form_aldolases_CS"/>
</dbReference>
<dbReference type="NCBIfam" id="TIGR00674">
    <property type="entry name" value="dapA"/>
    <property type="match status" value="1"/>
</dbReference>
<dbReference type="PANTHER" id="PTHR12128:SF66">
    <property type="entry name" value="4-HYDROXY-2-OXOGLUTARATE ALDOLASE, MITOCHONDRIAL"/>
    <property type="match status" value="1"/>
</dbReference>
<dbReference type="PANTHER" id="PTHR12128">
    <property type="entry name" value="DIHYDRODIPICOLINATE SYNTHASE"/>
    <property type="match status" value="1"/>
</dbReference>
<dbReference type="Pfam" id="PF00701">
    <property type="entry name" value="DHDPS"/>
    <property type="match status" value="1"/>
</dbReference>
<dbReference type="PIRSF" id="PIRSF001365">
    <property type="entry name" value="DHDPS"/>
    <property type="match status" value="1"/>
</dbReference>
<dbReference type="PRINTS" id="PR00146">
    <property type="entry name" value="DHPICSNTHASE"/>
</dbReference>
<dbReference type="SMART" id="SM01130">
    <property type="entry name" value="DHDPS"/>
    <property type="match status" value="1"/>
</dbReference>
<dbReference type="SUPFAM" id="SSF51569">
    <property type="entry name" value="Aldolase"/>
    <property type="match status" value="1"/>
</dbReference>
<dbReference type="PROSITE" id="PS00665">
    <property type="entry name" value="DHDPS_1"/>
    <property type="match status" value="1"/>
</dbReference>
<dbReference type="PROSITE" id="PS00666">
    <property type="entry name" value="DHDPS_2"/>
    <property type="match status" value="1"/>
</dbReference>
<proteinExistence type="inferred from homology"/>
<gene>
    <name evidence="1" type="primary">dapA</name>
    <name type="ordered locus">swp_2736</name>
</gene>
<comment type="function">
    <text evidence="1">Catalyzes the condensation of (S)-aspartate-beta-semialdehyde [(S)-ASA] and pyruvate to 4-hydroxy-tetrahydrodipicolinate (HTPA).</text>
</comment>
<comment type="catalytic activity">
    <reaction evidence="1">
        <text>L-aspartate 4-semialdehyde + pyruvate = (2S,4S)-4-hydroxy-2,3,4,5-tetrahydrodipicolinate + H2O + H(+)</text>
        <dbReference type="Rhea" id="RHEA:34171"/>
        <dbReference type="ChEBI" id="CHEBI:15361"/>
        <dbReference type="ChEBI" id="CHEBI:15377"/>
        <dbReference type="ChEBI" id="CHEBI:15378"/>
        <dbReference type="ChEBI" id="CHEBI:67139"/>
        <dbReference type="ChEBI" id="CHEBI:537519"/>
        <dbReference type="EC" id="4.3.3.7"/>
    </reaction>
</comment>
<comment type="pathway">
    <text evidence="1">Amino-acid biosynthesis; L-lysine biosynthesis via DAP pathway; (S)-tetrahydrodipicolinate from L-aspartate: step 3/4.</text>
</comment>
<comment type="subunit">
    <text evidence="1">Homotetramer; dimer of dimers.</text>
</comment>
<comment type="subcellular location">
    <subcellularLocation>
        <location evidence="1">Cytoplasm</location>
    </subcellularLocation>
</comment>
<comment type="similarity">
    <text evidence="1">Belongs to the DapA family.</text>
</comment>
<comment type="caution">
    <text evidence="2">Was originally thought to be a dihydrodipicolinate synthase (DHDPS), catalyzing the condensation of (S)-aspartate-beta-semialdehyde [(S)-ASA] and pyruvate to dihydrodipicolinate (DHDP). However, it was shown in E.coli that the product of the enzymatic reaction is not dihydrodipicolinate but in fact (4S)-4-hydroxy-2,3,4,5-tetrahydro-(2S)-dipicolinic acid (HTPA), and that the consecutive dehydration reaction leading to DHDP is not spontaneous but catalyzed by DapB.</text>
</comment>
<accession>B8CMS5</accession>
<organism>
    <name type="scientific">Shewanella piezotolerans (strain WP3 / JCM 13877)</name>
    <dbReference type="NCBI Taxonomy" id="225849"/>
    <lineage>
        <taxon>Bacteria</taxon>
        <taxon>Pseudomonadati</taxon>
        <taxon>Pseudomonadota</taxon>
        <taxon>Gammaproteobacteria</taxon>
        <taxon>Alteromonadales</taxon>
        <taxon>Shewanellaceae</taxon>
        <taxon>Shewanella</taxon>
    </lineage>
</organism>
<reference key="1">
    <citation type="journal article" date="2008" name="PLoS ONE">
        <title>Environmental adaptation: genomic analysis of the piezotolerant and psychrotolerant deep-sea iron reducing bacterium Shewanella piezotolerans WP3.</title>
        <authorList>
            <person name="Wang F."/>
            <person name="Wang J."/>
            <person name="Jian H."/>
            <person name="Zhang B."/>
            <person name="Li S."/>
            <person name="Wang F."/>
            <person name="Zeng X."/>
            <person name="Gao L."/>
            <person name="Bartlett D.H."/>
            <person name="Yu J."/>
            <person name="Hu S."/>
            <person name="Xiao X."/>
        </authorList>
    </citation>
    <scope>NUCLEOTIDE SEQUENCE [LARGE SCALE GENOMIC DNA]</scope>
    <source>
        <strain>WP3 / JCM 13877</strain>
    </source>
</reference>
<protein>
    <recommendedName>
        <fullName evidence="1">4-hydroxy-tetrahydrodipicolinate synthase</fullName>
        <shortName evidence="1">HTPA synthase</shortName>
        <ecNumber evidence="1">4.3.3.7</ecNumber>
    </recommendedName>
</protein>
<evidence type="ECO:0000255" key="1">
    <source>
        <dbReference type="HAMAP-Rule" id="MF_00418"/>
    </source>
</evidence>
<evidence type="ECO:0000305" key="2"/>
<name>DAPA_SHEPW</name>
<feature type="chain" id="PRO_1000124064" description="4-hydroxy-tetrahydrodipicolinate synthase">
    <location>
        <begin position="1"/>
        <end position="293"/>
    </location>
</feature>
<feature type="active site" description="Proton donor/acceptor" evidence="1">
    <location>
        <position position="133"/>
    </location>
</feature>
<feature type="active site" description="Schiff-base intermediate with substrate" evidence="1">
    <location>
        <position position="161"/>
    </location>
</feature>
<feature type="binding site" evidence="1">
    <location>
        <position position="45"/>
    </location>
    <ligand>
        <name>pyruvate</name>
        <dbReference type="ChEBI" id="CHEBI:15361"/>
    </ligand>
</feature>
<feature type="binding site" evidence="1">
    <location>
        <position position="203"/>
    </location>
    <ligand>
        <name>pyruvate</name>
        <dbReference type="ChEBI" id="CHEBI:15361"/>
    </ligand>
</feature>
<feature type="site" description="Part of a proton relay during catalysis" evidence="1">
    <location>
        <position position="44"/>
    </location>
</feature>
<feature type="site" description="Part of a proton relay during catalysis" evidence="1">
    <location>
        <position position="107"/>
    </location>
</feature>
<keyword id="KW-0028">Amino-acid biosynthesis</keyword>
<keyword id="KW-0963">Cytoplasm</keyword>
<keyword id="KW-0220">Diaminopimelate biosynthesis</keyword>
<keyword id="KW-0456">Lyase</keyword>
<keyword id="KW-0457">Lysine biosynthesis</keyword>
<keyword id="KW-0704">Schiff base</keyword>
<sequence length="293" mass="30753">MINGSIVALITPMNSDGTVDNKSLENLVEYHIAQGTDGIVAVGTTGESATLPAKEHIQVVQQTVSFAAGRIPIIGGNGANATAEAIELTKGLSSVGVEAMLGVTPYYNKPSPKGLVAHYKAVAQSTDIPQILYNVPGRTSVDMLPETVAELASVSNIIGVKEATGDLSRVSKLRSLCGDDFLLYSGDDATAREFLTLGGNGIISVANNIVPKAFKAMCDAALAGNTEEAIAVEKSMQSLFSALFCEANPIPVKWAAHQMGLISKGEIRLPLTELSSEFHGLLLEAMKNARIEV</sequence>